<organism>
    <name type="scientific">Maricaulis maris (strain MCS10)</name>
    <name type="common">Caulobacter maris</name>
    <dbReference type="NCBI Taxonomy" id="394221"/>
    <lineage>
        <taxon>Bacteria</taxon>
        <taxon>Pseudomonadati</taxon>
        <taxon>Pseudomonadota</taxon>
        <taxon>Alphaproteobacteria</taxon>
        <taxon>Maricaulales</taxon>
        <taxon>Maricaulaceae</taxon>
        <taxon>Maricaulis</taxon>
    </lineage>
</organism>
<feature type="chain" id="PRO_0000331061" description="SsrA-binding protein">
    <location>
        <begin position="1"/>
        <end position="156"/>
    </location>
</feature>
<protein>
    <recommendedName>
        <fullName evidence="1">SsrA-binding protein</fullName>
    </recommendedName>
    <alternativeName>
        <fullName evidence="1">Small protein B</fullName>
    </alternativeName>
</protein>
<keyword id="KW-0963">Cytoplasm</keyword>
<keyword id="KW-1185">Reference proteome</keyword>
<keyword id="KW-0694">RNA-binding</keyword>
<name>SSRP_MARMM</name>
<comment type="function">
    <text evidence="1">Required for rescue of stalled ribosomes mediated by trans-translation. Binds to transfer-messenger RNA (tmRNA), required for stable association of tmRNA with ribosomes. tmRNA and SmpB together mimic tRNA shape, replacing the anticodon stem-loop with SmpB. tmRNA is encoded by the ssrA gene; the 2 termini fold to resemble tRNA(Ala) and it encodes a 'tag peptide', a short internal open reading frame. During trans-translation Ala-aminoacylated tmRNA acts like a tRNA, entering the A-site of stalled ribosomes, displacing the stalled mRNA. The ribosome then switches to translate the ORF on the tmRNA; the nascent peptide is terminated with the 'tag peptide' encoded by the tmRNA and targeted for degradation. The ribosome is freed to recommence translation, which seems to be the essential function of trans-translation.</text>
</comment>
<comment type="subcellular location">
    <subcellularLocation>
        <location evidence="1">Cytoplasm</location>
    </subcellularLocation>
    <text evidence="1">The tmRNA-SmpB complex associates with stalled 70S ribosomes.</text>
</comment>
<comment type="similarity">
    <text evidence="1">Belongs to the SmpB family.</text>
</comment>
<dbReference type="EMBL" id="CP000449">
    <property type="protein sequence ID" value="ABI65874.1"/>
    <property type="molecule type" value="Genomic_DNA"/>
</dbReference>
<dbReference type="RefSeq" id="WP_011643521.1">
    <property type="nucleotide sequence ID" value="NC_008347.1"/>
</dbReference>
<dbReference type="SMR" id="Q0APB3"/>
<dbReference type="STRING" id="394221.Mmar10_1582"/>
<dbReference type="KEGG" id="mmr:Mmar10_1582"/>
<dbReference type="eggNOG" id="COG0691">
    <property type="taxonomic scope" value="Bacteria"/>
</dbReference>
<dbReference type="HOGENOM" id="CLU_108953_0_1_5"/>
<dbReference type="OrthoDB" id="9805462at2"/>
<dbReference type="Proteomes" id="UP000001964">
    <property type="component" value="Chromosome"/>
</dbReference>
<dbReference type="GO" id="GO:0005829">
    <property type="term" value="C:cytosol"/>
    <property type="evidence" value="ECO:0007669"/>
    <property type="project" value="TreeGrafter"/>
</dbReference>
<dbReference type="GO" id="GO:0003723">
    <property type="term" value="F:RNA binding"/>
    <property type="evidence" value="ECO:0007669"/>
    <property type="project" value="UniProtKB-UniRule"/>
</dbReference>
<dbReference type="GO" id="GO:0070929">
    <property type="term" value="P:trans-translation"/>
    <property type="evidence" value="ECO:0007669"/>
    <property type="project" value="UniProtKB-UniRule"/>
</dbReference>
<dbReference type="CDD" id="cd09294">
    <property type="entry name" value="SmpB"/>
    <property type="match status" value="1"/>
</dbReference>
<dbReference type="Gene3D" id="2.40.280.10">
    <property type="match status" value="1"/>
</dbReference>
<dbReference type="HAMAP" id="MF_00023">
    <property type="entry name" value="SmpB"/>
    <property type="match status" value="1"/>
</dbReference>
<dbReference type="InterPro" id="IPR023620">
    <property type="entry name" value="SmpB"/>
</dbReference>
<dbReference type="InterPro" id="IPR000037">
    <property type="entry name" value="SsrA-bd_prot"/>
</dbReference>
<dbReference type="InterPro" id="IPR020081">
    <property type="entry name" value="SsrA-bd_prot_CS"/>
</dbReference>
<dbReference type="NCBIfam" id="NF003843">
    <property type="entry name" value="PRK05422.1"/>
    <property type="match status" value="1"/>
</dbReference>
<dbReference type="NCBIfam" id="TIGR00086">
    <property type="entry name" value="smpB"/>
    <property type="match status" value="1"/>
</dbReference>
<dbReference type="PANTHER" id="PTHR30308:SF2">
    <property type="entry name" value="SSRA-BINDING PROTEIN"/>
    <property type="match status" value="1"/>
</dbReference>
<dbReference type="PANTHER" id="PTHR30308">
    <property type="entry name" value="TMRNA-BINDING COMPONENT OF TRANS-TRANSLATION TAGGING COMPLEX"/>
    <property type="match status" value="1"/>
</dbReference>
<dbReference type="Pfam" id="PF01668">
    <property type="entry name" value="SmpB"/>
    <property type="match status" value="1"/>
</dbReference>
<dbReference type="SUPFAM" id="SSF74982">
    <property type="entry name" value="Small protein B (SmpB)"/>
    <property type="match status" value="1"/>
</dbReference>
<dbReference type="PROSITE" id="PS01317">
    <property type="entry name" value="SSRP"/>
    <property type="match status" value="1"/>
</dbReference>
<proteinExistence type="inferred from homology"/>
<reference key="1">
    <citation type="submission" date="2006-08" db="EMBL/GenBank/DDBJ databases">
        <title>Complete sequence of Maricaulis maris MCS10.</title>
        <authorList>
            <consortium name="US DOE Joint Genome Institute"/>
            <person name="Copeland A."/>
            <person name="Lucas S."/>
            <person name="Lapidus A."/>
            <person name="Barry K."/>
            <person name="Detter J.C."/>
            <person name="Glavina del Rio T."/>
            <person name="Hammon N."/>
            <person name="Israni S."/>
            <person name="Dalin E."/>
            <person name="Tice H."/>
            <person name="Pitluck S."/>
            <person name="Saunders E."/>
            <person name="Brettin T."/>
            <person name="Bruce D."/>
            <person name="Han C."/>
            <person name="Tapia R."/>
            <person name="Gilna P."/>
            <person name="Schmutz J."/>
            <person name="Larimer F."/>
            <person name="Land M."/>
            <person name="Hauser L."/>
            <person name="Kyrpides N."/>
            <person name="Mikhailova N."/>
            <person name="Viollier P."/>
            <person name="Stephens C."/>
            <person name="Richardson P."/>
        </authorList>
    </citation>
    <scope>NUCLEOTIDE SEQUENCE [LARGE SCALE GENOMIC DNA]</scope>
    <source>
        <strain>MCS10</strain>
    </source>
</reference>
<gene>
    <name evidence="1" type="primary">smpB</name>
    <name type="ordered locus">Mmar10_1582</name>
</gene>
<sequence length="156" mass="17744">MSKPKSETAPVAVNRRARFDYEIEETFEAGLMLMGSEVKSLREGRANIAESYVSAEREGLWLINADIPPYGPANRFNHEPKRHRKLLLKAKEIARLTGASTQQGRTIVALRLYFNGRGLAKLQIGLATGKKTVDKRQTIKDREWNKQKSRLMKNYG</sequence>
<accession>Q0APB3</accession>
<evidence type="ECO:0000255" key="1">
    <source>
        <dbReference type="HAMAP-Rule" id="MF_00023"/>
    </source>
</evidence>